<keyword id="KW-0325">Glycoprotein</keyword>
<keyword id="KW-0456">Lyase</keyword>
<keyword id="KW-0472">Membrane</keyword>
<keyword id="KW-0808">Transferase</keyword>
<keyword id="KW-0812">Transmembrane</keyword>
<keyword id="KW-1133">Transmembrane helix</keyword>
<accession>A0A1V0QSF1</accession>
<name>ERIG_HERER</name>
<protein>
    <recommendedName>
        <fullName evidence="5">Diterpene cyclase eriG</fullName>
        <ecNumber evidence="3 4">4.2.3.206</ecNumber>
    </recommendedName>
    <alternativeName>
        <fullName evidence="5">Erinacine biosynthesis cluster protein G</fullName>
    </alternativeName>
</protein>
<comment type="function">
    <text evidence="3 4 7">Diterpene cyclase; part of the gene cluster that mediates the biosynthesis of erinacines, cyathane-xylosides that show unique biological activities, including leishmanicidal activity, stimulating activity for nerve growth-factor synthesis, and agonistic activity toward the kappa opioid receptor (PubMed:28371074, PubMed:31535864). Within the pathway, eriG acts as a diterpene cyclase that converts geranylgeranyl diphosphate (GGPP) into cyatha-3,12-diene (PubMed:28371074, PubMed:31535864). EriG is unable to use geranyl diphosphate (GPP) or farnesyl diphosphate (FPP) as substrates (PubMed:28371074, PubMed:31535864). The first step of the erinacines biosynthesis pathway is catalyzed by the geranylgeranyl diphosphate (GGPP) synthase eriE via conversion of farnesyl pyrophosphate and isopentyl pyrophosphate into geranylgeranyl pyrophosphate (GGPP). GGPP is then substrate of the diterpene cyclase eriG for the production of cyatha-3,12-diene. The cytochrome P450 monooxygenase eriI then hydroxylates cyatha-3,12-diene at C-14 of the seven-membered ring to produce erinacol, which is further hydroxylated at C-15 by the cytochrome P450 monooxygenase eriC to yield cyathadiol. The cytochrome P450 monooxygenase eriA then catalyzes C-11 hydroxylation in the presence of the short chain dehydrogenase/reductase (SDR) eriH, which leads to the production of cyathatriol. The acetyltransferase eriL converts cyathatriol into 11-O-acetyl-cyathatriol. The SDR eriH catalyzes further oxidation of 11-O-acetyl-cyathatriol into 1-O-acetylcyathin A3. Finally, the glycosyl transferase eriJ tranfers xylose from UDP-xylose onto C-14 of 11-O-acetyl-cyathatriol to form eracine Q. EriJ is also able to convert 11-O-acetyl-cyathatriol to eracine Q2 by using UDP-D-glucose as cosubstrate, but at a lower rate (Probable).</text>
</comment>
<comment type="catalytic activity">
    <reaction evidence="3 4">
        <text>(2E,6E,10E)-geranylgeranyl diphosphate = (-)-cyatha-3,12-diene + diphosphate</text>
        <dbReference type="Rhea" id="RHEA:75147"/>
        <dbReference type="ChEBI" id="CHEBI:33019"/>
        <dbReference type="ChEBI" id="CHEBI:58756"/>
        <dbReference type="ChEBI" id="CHEBI:193155"/>
        <dbReference type="EC" id="4.2.3.206"/>
    </reaction>
    <physiologicalReaction direction="left-to-right" evidence="3 4">
        <dbReference type="Rhea" id="RHEA:75148"/>
    </physiologicalReaction>
</comment>
<comment type="cofactor">
    <cofactor evidence="3">
        <name>Mg(2+)</name>
        <dbReference type="ChEBI" id="CHEBI:18420"/>
    </cofactor>
</comment>
<comment type="activity regulation">
    <text evidence="3">EDTA completely blocks the reaction.</text>
</comment>
<comment type="biophysicochemical properties">
    <kinetics>
        <KM evidence="3">99.6 uM for GGPP</KM>
        <Vmax evidence="3">4.0 nmol/min/mg enzyme</Vmax>
    </kinetics>
</comment>
<comment type="pathway">
    <text evidence="3 4">Secondary metabolite biosynthesis.</text>
</comment>
<comment type="subcellular location">
    <subcellularLocation>
        <location evidence="1">Membrane</location>
        <topology evidence="1">Multi-pass membrane protein</topology>
    </subcellularLocation>
</comment>
<comment type="similarity">
    <text evidence="6">Belongs to the UbiA prenyltransferase family.</text>
</comment>
<reference key="1">
    <citation type="journal article" date="2017" name="Angew. Chem. Int. Ed.">
        <title>Discovery and characterization of a new family of diterpene cyclases in bacteria and fungi.</title>
        <authorList>
            <person name="Yang Y.L."/>
            <person name="Zhang S."/>
            <person name="Ma K."/>
            <person name="Xu Y."/>
            <person name="Tao Q."/>
            <person name="Chen Y."/>
            <person name="Chen J."/>
            <person name="Guo S."/>
            <person name="Ren J."/>
            <person name="Wang W."/>
            <person name="Tao Y."/>
            <person name="Yin W.B."/>
            <person name="Liu H."/>
        </authorList>
    </citation>
    <scope>NUCLEOTIDE SEQUENCE [MRNA]</scope>
    <scope>CATALYTIC ACTIVITY</scope>
    <scope>COFACTOR</scope>
    <scope>SUBSTRATE SPECIFICITY</scope>
    <scope>ACTIVITY REGULATION</scope>
    <scope>FUNCTION</scope>
    <scope>PATHWAY</scope>
</reference>
<reference key="2">
    <citation type="journal article" date="2019" name="J. Am. Chem. Soc.">
        <title>Efficient reconstitution of basidiomycota diterpene erinacine gene cluster in ascomycota host Aspergillus oryzae based on genomic DNA sequences.</title>
        <authorList>
            <person name="Liu C."/>
            <person name="Minami A."/>
            <person name="Ozaki T."/>
            <person name="Wu J."/>
            <person name="Kawagishi H."/>
            <person name="Maruyama J.I."/>
            <person name="Oikawa H."/>
        </authorList>
    </citation>
    <scope>FUNCTION</scope>
    <scope>CATALYTIC ACTIVITY</scope>
    <scope>PATHWAY</scope>
</reference>
<organism>
    <name type="scientific">Hericium erinaceus</name>
    <name type="common">Lion's mane mushroom</name>
    <name type="synonym">Hydnum erinaceus</name>
    <dbReference type="NCBI Taxonomy" id="91752"/>
    <lineage>
        <taxon>Eukaryota</taxon>
        <taxon>Fungi</taxon>
        <taxon>Dikarya</taxon>
        <taxon>Basidiomycota</taxon>
        <taxon>Agaricomycotina</taxon>
        <taxon>Agaricomycetes</taxon>
        <taxon>Russulales</taxon>
        <taxon>Hericiaceae</taxon>
        <taxon>Hericium</taxon>
    </lineage>
</organism>
<dbReference type="EC" id="4.2.3.206" evidence="3 4"/>
<dbReference type="EMBL" id="KY683782">
    <property type="protein sequence ID" value="ARE72244.1"/>
    <property type="molecule type" value="mRNA"/>
</dbReference>
<dbReference type="SMR" id="A0A1V0QSF1"/>
<dbReference type="GlyCosmos" id="A0A1V0QSF1">
    <property type="glycosylation" value="1 site, No reported glycans"/>
</dbReference>
<dbReference type="KEGG" id="ag:ARE72244"/>
<dbReference type="BioCyc" id="MetaCyc:MONOMER-124243"/>
<dbReference type="SABIO-RK" id="A0A1V0QSF1"/>
<dbReference type="GO" id="GO:0016020">
    <property type="term" value="C:membrane"/>
    <property type="evidence" value="ECO:0007669"/>
    <property type="project" value="UniProtKB-SubCell"/>
</dbReference>
<dbReference type="GO" id="GO:0016829">
    <property type="term" value="F:lyase activity"/>
    <property type="evidence" value="ECO:0007669"/>
    <property type="project" value="UniProtKB-KW"/>
</dbReference>
<dbReference type="GO" id="GO:0016765">
    <property type="term" value="F:transferase activity, transferring alkyl or aryl (other than methyl) groups"/>
    <property type="evidence" value="ECO:0007669"/>
    <property type="project" value="InterPro"/>
</dbReference>
<dbReference type="CDD" id="cd13965">
    <property type="entry name" value="PT_UbiA_3"/>
    <property type="match status" value="1"/>
</dbReference>
<dbReference type="Gene3D" id="1.10.357.140">
    <property type="entry name" value="UbiA prenyltransferase"/>
    <property type="match status" value="1"/>
</dbReference>
<dbReference type="Gene3D" id="1.20.120.1780">
    <property type="entry name" value="UbiA prenyltransferase"/>
    <property type="match status" value="1"/>
</dbReference>
<dbReference type="InterPro" id="IPR050475">
    <property type="entry name" value="Prenyltransferase_related"/>
</dbReference>
<dbReference type="InterPro" id="IPR000537">
    <property type="entry name" value="UbiA_prenyltransferase"/>
</dbReference>
<dbReference type="InterPro" id="IPR044878">
    <property type="entry name" value="UbiA_sf"/>
</dbReference>
<dbReference type="PANTHER" id="PTHR42723">
    <property type="entry name" value="CHLOROPHYLL SYNTHASE"/>
    <property type="match status" value="1"/>
</dbReference>
<dbReference type="PANTHER" id="PTHR42723:SF1">
    <property type="entry name" value="CHLOROPHYLL SYNTHASE, CHLOROPLASTIC"/>
    <property type="match status" value="1"/>
</dbReference>
<dbReference type="Pfam" id="PF01040">
    <property type="entry name" value="UbiA"/>
    <property type="match status" value="1"/>
</dbReference>
<evidence type="ECO:0000255" key="1"/>
<evidence type="ECO:0000255" key="2">
    <source>
        <dbReference type="PROSITE-ProRule" id="PRU00498"/>
    </source>
</evidence>
<evidence type="ECO:0000269" key="3">
    <source>
    </source>
</evidence>
<evidence type="ECO:0000269" key="4">
    <source>
    </source>
</evidence>
<evidence type="ECO:0000303" key="5">
    <source>
    </source>
</evidence>
<evidence type="ECO:0000305" key="6"/>
<evidence type="ECO:0000305" key="7">
    <source>
    </source>
</evidence>
<feature type="chain" id="PRO_0000452925" description="Diterpene cyclase eriG">
    <location>
        <begin position="1"/>
        <end position="306"/>
    </location>
</feature>
<feature type="transmembrane region" description="Helical" evidence="1">
    <location>
        <begin position="13"/>
        <end position="33"/>
    </location>
</feature>
<feature type="transmembrane region" description="Helical" evidence="1">
    <location>
        <begin position="43"/>
        <end position="63"/>
    </location>
</feature>
<feature type="transmembrane region" description="Helical" evidence="1">
    <location>
        <begin position="115"/>
        <end position="135"/>
    </location>
</feature>
<feature type="transmembrane region" description="Helical" evidence="1">
    <location>
        <begin position="161"/>
        <end position="181"/>
    </location>
</feature>
<feature type="transmembrane region" description="Helical" evidence="1">
    <location>
        <begin position="213"/>
        <end position="233"/>
    </location>
</feature>
<feature type="transmembrane region" description="Helical" evidence="1">
    <location>
        <begin position="265"/>
        <end position="285"/>
    </location>
</feature>
<feature type="glycosylation site" description="N-linked (GlcNAc...) asparagine" evidence="2">
    <location>
        <position position="64"/>
    </location>
</feature>
<sequence length="306" mass="33916">MSVFAPIARELDIFFGFSWRDWSTTIIPGSIFAVGAMRDLPPATLVKNYLFLVTWLTPYIYFFNLSNQITGVDEDKINKPDRPIPSGKVTLQGAQRRWIAAFSTFLGIALYQPEFLPETLCWIATVAFLCLTSYGDHWFGKNCVAMTTGTWALLSASWKAIAPATPTSDAWVYAVSVWAGLITHIQDLRDMEGDKAVGRKTLPLVFGDMGSRLIITFFALPAACWVLSLAGIFQLAPVTLGALHAILGYRVLRQGGPRYDHKTYMFYTYIFCLILAFCALDGLGLKINAESLRALLATTGVSLKEL</sequence>
<gene>
    <name evidence="5" type="primary">eriG</name>
</gene>
<proteinExistence type="evidence at protein level"/>